<organism>
    <name type="scientific">Proteus mirabilis (strain HI4320)</name>
    <dbReference type="NCBI Taxonomy" id="529507"/>
    <lineage>
        <taxon>Bacteria</taxon>
        <taxon>Pseudomonadati</taxon>
        <taxon>Pseudomonadota</taxon>
        <taxon>Gammaproteobacteria</taxon>
        <taxon>Enterobacterales</taxon>
        <taxon>Morganellaceae</taxon>
        <taxon>Proteus</taxon>
    </lineage>
</organism>
<reference key="1">
    <citation type="journal article" date="2008" name="J. Bacteriol.">
        <title>Complete genome sequence of uropathogenic Proteus mirabilis, a master of both adherence and motility.</title>
        <authorList>
            <person name="Pearson M.M."/>
            <person name="Sebaihia M."/>
            <person name="Churcher C."/>
            <person name="Quail M.A."/>
            <person name="Seshasayee A.S."/>
            <person name="Luscombe N.M."/>
            <person name="Abdellah Z."/>
            <person name="Arrosmith C."/>
            <person name="Atkin B."/>
            <person name="Chillingworth T."/>
            <person name="Hauser H."/>
            <person name="Jagels K."/>
            <person name="Moule S."/>
            <person name="Mungall K."/>
            <person name="Norbertczak H."/>
            <person name="Rabbinowitsch E."/>
            <person name="Walker D."/>
            <person name="Whithead S."/>
            <person name="Thomson N.R."/>
            <person name="Rather P.N."/>
            <person name="Parkhill J."/>
            <person name="Mobley H.L.T."/>
        </authorList>
    </citation>
    <scope>NUCLEOTIDE SEQUENCE [LARGE SCALE GENOMIC DNA]</scope>
    <source>
        <strain>HI4320</strain>
    </source>
</reference>
<comment type="function">
    <text evidence="1">Catalyzes the conversion of dihydroorotate to orotate with quinone as electron acceptor.</text>
</comment>
<comment type="catalytic activity">
    <reaction evidence="1">
        <text>(S)-dihydroorotate + a quinone = orotate + a quinol</text>
        <dbReference type="Rhea" id="RHEA:30187"/>
        <dbReference type="ChEBI" id="CHEBI:24646"/>
        <dbReference type="ChEBI" id="CHEBI:30839"/>
        <dbReference type="ChEBI" id="CHEBI:30864"/>
        <dbReference type="ChEBI" id="CHEBI:132124"/>
        <dbReference type="EC" id="1.3.5.2"/>
    </reaction>
</comment>
<comment type="cofactor">
    <cofactor evidence="1">
        <name>FMN</name>
        <dbReference type="ChEBI" id="CHEBI:58210"/>
    </cofactor>
    <text evidence="1">Binds 1 FMN per subunit.</text>
</comment>
<comment type="pathway">
    <text evidence="1">Pyrimidine metabolism; UMP biosynthesis via de novo pathway; orotate from (S)-dihydroorotate (quinone route): step 1/1.</text>
</comment>
<comment type="subunit">
    <text evidence="1">Monomer.</text>
</comment>
<comment type="subcellular location">
    <subcellularLocation>
        <location evidence="1">Cell membrane</location>
        <topology evidence="1">Peripheral membrane protein</topology>
    </subcellularLocation>
</comment>
<comment type="similarity">
    <text evidence="1">Belongs to the dihydroorotate dehydrogenase family. Type 2 subfamily.</text>
</comment>
<name>PYRD_PROMH</name>
<sequence>MYYSLVRKALFRLDPERAHDFTFRQLKRLSHSPFQFLIQQSLPAKPVSCMGLSFKNPLGLAAGLDKNGDCIDALGAMGFGFIEVGTVTPRAQVGNDKPRLFRLVEAEGLINRMGFNNLGVDNLIENVKQSQYGGVLGINIGKNKDTPVEQGKDDYLICMEKVYPYAGYIAINISSPNTPGLRTLQYGEALDDLLSAIKNKQLELQGKYQKYVPVAVKIAPDLTHEELIQVADSLVRHHIDGVIATNTTLDKSLVSGLDHCNEAGGLSGRPVQSKSTQIIRQLNEELKGALPIIGVGGIDSLTAAREKMDAGASLIQVYSGFIYHGPALIKSIINHI</sequence>
<feature type="chain" id="PRO_1000100275" description="Dihydroorotate dehydrogenase (quinone)">
    <location>
        <begin position="1"/>
        <end position="336"/>
    </location>
</feature>
<feature type="active site" description="Nucleophile" evidence="1">
    <location>
        <position position="175"/>
    </location>
</feature>
<feature type="binding site" evidence="1">
    <location>
        <begin position="62"/>
        <end position="66"/>
    </location>
    <ligand>
        <name>FMN</name>
        <dbReference type="ChEBI" id="CHEBI:58210"/>
    </ligand>
</feature>
<feature type="binding site" evidence="1">
    <location>
        <position position="66"/>
    </location>
    <ligand>
        <name>substrate</name>
    </ligand>
</feature>
<feature type="binding site" evidence="1">
    <location>
        <position position="86"/>
    </location>
    <ligand>
        <name>FMN</name>
        <dbReference type="ChEBI" id="CHEBI:58210"/>
    </ligand>
</feature>
<feature type="binding site" evidence="1">
    <location>
        <begin position="111"/>
        <end position="115"/>
    </location>
    <ligand>
        <name>substrate</name>
    </ligand>
</feature>
<feature type="binding site" evidence="1">
    <location>
        <position position="139"/>
    </location>
    <ligand>
        <name>FMN</name>
        <dbReference type="ChEBI" id="CHEBI:58210"/>
    </ligand>
</feature>
<feature type="binding site" evidence="1">
    <location>
        <position position="172"/>
    </location>
    <ligand>
        <name>FMN</name>
        <dbReference type="ChEBI" id="CHEBI:58210"/>
    </ligand>
</feature>
<feature type="binding site" evidence="1">
    <location>
        <position position="172"/>
    </location>
    <ligand>
        <name>substrate</name>
    </ligand>
</feature>
<feature type="binding site" evidence="1">
    <location>
        <position position="177"/>
    </location>
    <ligand>
        <name>substrate</name>
    </ligand>
</feature>
<feature type="binding site" evidence="1">
    <location>
        <position position="217"/>
    </location>
    <ligand>
        <name>FMN</name>
        <dbReference type="ChEBI" id="CHEBI:58210"/>
    </ligand>
</feature>
<feature type="binding site" evidence="1">
    <location>
        <position position="245"/>
    </location>
    <ligand>
        <name>FMN</name>
        <dbReference type="ChEBI" id="CHEBI:58210"/>
    </ligand>
</feature>
<feature type="binding site" evidence="1">
    <location>
        <begin position="246"/>
        <end position="247"/>
    </location>
    <ligand>
        <name>substrate</name>
    </ligand>
</feature>
<feature type="binding site" evidence="1">
    <location>
        <position position="268"/>
    </location>
    <ligand>
        <name>FMN</name>
        <dbReference type="ChEBI" id="CHEBI:58210"/>
    </ligand>
</feature>
<feature type="binding site" evidence="1">
    <location>
        <position position="297"/>
    </location>
    <ligand>
        <name>FMN</name>
        <dbReference type="ChEBI" id="CHEBI:58210"/>
    </ligand>
</feature>
<feature type="binding site" evidence="1">
    <location>
        <begin position="318"/>
        <end position="319"/>
    </location>
    <ligand>
        <name>FMN</name>
        <dbReference type="ChEBI" id="CHEBI:58210"/>
    </ligand>
</feature>
<dbReference type="EC" id="1.3.5.2" evidence="1"/>
<dbReference type="EMBL" id="AM942759">
    <property type="protein sequence ID" value="CAR41768.1"/>
    <property type="molecule type" value="Genomic_DNA"/>
</dbReference>
<dbReference type="RefSeq" id="WP_004251935.1">
    <property type="nucleotide sequence ID" value="NC_010554.1"/>
</dbReference>
<dbReference type="SMR" id="B4EVC3"/>
<dbReference type="EnsemblBacteria" id="CAR41768">
    <property type="protein sequence ID" value="CAR41768"/>
    <property type="gene ID" value="PMI0771"/>
</dbReference>
<dbReference type="GeneID" id="6802594"/>
<dbReference type="KEGG" id="pmr:PMI0771"/>
<dbReference type="eggNOG" id="COG0167">
    <property type="taxonomic scope" value="Bacteria"/>
</dbReference>
<dbReference type="HOGENOM" id="CLU_013640_2_0_6"/>
<dbReference type="UniPathway" id="UPA00070">
    <property type="reaction ID" value="UER00946"/>
</dbReference>
<dbReference type="Proteomes" id="UP000008319">
    <property type="component" value="Chromosome"/>
</dbReference>
<dbReference type="GO" id="GO:0005737">
    <property type="term" value="C:cytoplasm"/>
    <property type="evidence" value="ECO:0007669"/>
    <property type="project" value="InterPro"/>
</dbReference>
<dbReference type="GO" id="GO:0005886">
    <property type="term" value="C:plasma membrane"/>
    <property type="evidence" value="ECO:0007669"/>
    <property type="project" value="UniProtKB-SubCell"/>
</dbReference>
<dbReference type="GO" id="GO:0106430">
    <property type="term" value="F:dihydroorotate dehydrogenase (quinone) activity"/>
    <property type="evidence" value="ECO:0007669"/>
    <property type="project" value="UniProtKB-EC"/>
</dbReference>
<dbReference type="GO" id="GO:0006207">
    <property type="term" value="P:'de novo' pyrimidine nucleobase biosynthetic process"/>
    <property type="evidence" value="ECO:0007669"/>
    <property type="project" value="InterPro"/>
</dbReference>
<dbReference type="GO" id="GO:0044205">
    <property type="term" value="P:'de novo' UMP biosynthetic process"/>
    <property type="evidence" value="ECO:0007669"/>
    <property type="project" value="UniProtKB-UniRule"/>
</dbReference>
<dbReference type="CDD" id="cd04738">
    <property type="entry name" value="DHOD_2_like"/>
    <property type="match status" value="1"/>
</dbReference>
<dbReference type="FunFam" id="3.20.20.70:FF:000028">
    <property type="entry name" value="Dihydroorotate dehydrogenase (quinone)"/>
    <property type="match status" value="1"/>
</dbReference>
<dbReference type="Gene3D" id="3.20.20.70">
    <property type="entry name" value="Aldolase class I"/>
    <property type="match status" value="1"/>
</dbReference>
<dbReference type="HAMAP" id="MF_00225">
    <property type="entry name" value="DHO_dh_type2"/>
    <property type="match status" value="1"/>
</dbReference>
<dbReference type="InterPro" id="IPR013785">
    <property type="entry name" value="Aldolase_TIM"/>
</dbReference>
<dbReference type="InterPro" id="IPR050074">
    <property type="entry name" value="DHO_dehydrogenase"/>
</dbReference>
<dbReference type="InterPro" id="IPR012135">
    <property type="entry name" value="Dihydroorotate_DH_1_2"/>
</dbReference>
<dbReference type="InterPro" id="IPR005719">
    <property type="entry name" value="Dihydroorotate_DH_2"/>
</dbReference>
<dbReference type="InterPro" id="IPR005720">
    <property type="entry name" value="Dihydroorotate_DH_cat"/>
</dbReference>
<dbReference type="InterPro" id="IPR001295">
    <property type="entry name" value="Dihydroorotate_DH_CS"/>
</dbReference>
<dbReference type="NCBIfam" id="NF003644">
    <property type="entry name" value="PRK05286.1-1"/>
    <property type="match status" value="1"/>
</dbReference>
<dbReference type="NCBIfam" id="NF003645">
    <property type="entry name" value="PRK05286.1-2"/>
    <property type="match status" value="1"/>
</dbReference>
<dbReference type="NCBIfam" id="NF003646">
    <property type="entry name" value="PRK05286.1-4"/>
    <property type="match status" value="1"/>
</dbReference>
<dbReference type="NCBIfam" id="NF003652">
    <property type="entry name" value="PRK05286.2-5"/>
    <property type="match status" value="1"/>
</dbReference>
<dbReference type="NCBIfam" id="TIGR01036">
    <property type="entry name" value="pyrD_sub2"/>
    <property type="match status" value="1"/>
</dbReference>
<dbReference type="PANTHER" id="PTHR48109:SF4">
    <property type="entry name" value="DIHYDROOROTATE DEHYDROGENASE (QUINONE), MITOCHONDRIAL"/>
    <property type="match status" value="1"/>
</dbReference>
<dbReference type="PANTHER" id="PTHR48109">
    <property type="entry name" value="DIHYDROOROTATE DEHYDROGENASE (QUINONE), MITOCHONDRIAL-RELATED"/>
    <property type="match status" value="1"/>
</dbReference>
<dbReference type="Pfam" id="PF01180">
    <property type="entry name" value="DHO_dh"/>
    <property type="match status" value="1"/>
</dbReference>
<dbReference type="PIRSF" id="PIRSF000164">
    <property type="entry name" value="DHO_oxidase"/>
    <property type="match status" value="1"/>
</dbReference>
<dbReference type="SUPFAM" id="SSF51395">
    <property type="entry name" value="FMN-linked oxidoreductases"/>
    <property type="match status" value="1"/>
</dbReference>
<dbReference type="PROSITE" id="PS00911">
    <property type="entry name" value="DHODEHASE_1"/>
    <property type="match status" value="1"/>
</dbReference>
<dbReference type="PROSITE" id="PS00912">
    <property type="entry name" value="DHODEHASE_2"/>
    <property type="match status" value="1"/>
</dbReference>
<gene>
    <name evidence="1" type="primary">pyrD</name>
    <name type="ordered locus">PMI0771</name>
</gene>
<protein>
    <recommendedName>
        <fullName evidence="1">Dihydroorotate dehydrogenase (quinone)</fullName>
        <ecNumber evidence="1">1.3.5.2</ecNumber>
    </recommendedName>
    <alternativeName>
        <fullName evidence="1">DHOdehase</fullName>
        <shortName evidence="1">DHOD</shortName>
        <shortName evidence="1">DHODase</shortName>
    </alternativeName>
    <alternativeName>
        <fullName evidence="1">Dihydroorotate oxidase</fullName>
    </alternativeName>
</protein>
<accession>B4EVC3</accession>
<evidence type="ECO:0000255" key="1">
    <source>
        <dbReference type="HAMAP-Rule" id="MF_00225"/>
    </source>
</evidence>
<keyword id="KW-1003">Cell membrane</keyword>
<keyword id="KW-0285">Flavoprotein</keyword>
<keyword id="KW-0288">FMN</keyword>
<keyword id="KW-0472">Membrane</keyword>
<keyword id="KW-0560">Oxidoreductase</keyword>
<keyword id="KW-0665">Pyrimidine biosynthesis</keyword>
<keyword id="KW-1185">Reference proteome</keyword>
<proteinExistence type="inferred from homology"/>